<dbReference type="EC" id="3.1.1.61" evidence="1"/>
<dbReference type="EC" id="3.5.1.44" evidence="1"/>
<dbReference type="EMBL" id="AM039952">
    <property type="protein sequence ID" value="CAJ23607.1"/>
    <property type="molecule type" value="Genomic_DNA"/>
</dbReference>
<dbReference type="RefSeq" id="WP_003486327.1">
    <property type="nucleotide sequence ID" value="NZ_CP017190.1"/>
</dbReference>
<dbReference type="SMR" id="Q3BUA2"/>
<dbReference type="STRING" id="456327.BJD11_12775"/>
<dbReference type="KEGG" id="xcv:XCV1930"/>
<dbReference type="eggNOG" id="COG2201">
    <property type="taxonomic scope" value="Bacteria"/>
</dbReference>
<dbReference type="HOGENOM" id="CLU_000445_51_0_6"/>
<dbReference type="Proteomes" id="UP000007069">
    <property type="component" value="Chromosome"/>
</dbReference>
<dbReference type="GO" id="GO:0005737">
    <property type="term" value="C:cytoplasm"/>
    <property type="evidence" value="ECO:0007669"/>
    <property type="project" value="UniProtKB-SubCell"/>
</dbReference>
<dbReference type="GO" id="GO:0000156">
    <property type="term" value="F:phosphorelay response regulator activity"/>
    <property type="evidence" value="ECO:0007669"/>
    <property type="project" value="InterPro"/>
</dbReference>
<dbReference type="GO" id="GO:0008984">
    <property type="term" value="F:protein-glutamate methylesterase activity"/>
    <property type="evidence" value="ECO:0007669"/>
    <property type="project" value="UniProtKB-UniRule"/>
</dbReference>
<dbReference type="GO" id="GO:0050568">
    <property type="term" value="F:protein-glutamine glutaminase activity"/>
    <property type="evidence" value="ECO:0007669"/>
    <property type="project" value="UniProtKB-UniRule"/>
</dbReference>
<dbReference type="GO" id="GO:0006935">
    <property type="term" value="P:chemotaxis"/>
    <property type="evidence" value="ECO:0007669"/>
    <property type="project" value="UniProtKB-UniRule"/>
</dbReference>
<dbReference type="CDD" id="cd16432">
    <property type="entry name" value="CheB_Rec"/>
    <property type="match status" value="1"/>
</dbReference>
<dbReference type="CDD" id="cd17541">
    <property type="entry name" value="REC_CheB-like"/>
    <property type="match status" value="1"/>
</dbReference>
<dbReference type="FunFam" id="3.40.50.2300:FF:000060">
    <property type="entry name" value="Protein-glutamate methylesterase/protein-glutamine glutaminase"/>
    <property type="match status" value="1"/>
</dbReference>
<dbReference type="Gene3D" id="3.40.50.2300">
    <property type="match status" value="1"/>
</dbReference>
<dbReference type="Gene3D" id="3.40.50.180">
    <property type="entry name" value="Methylesterase CheB, C-terminal domain"/>
    <property type="match status" value="1"/>
</dbReference>
<dbReference type="HAMAP" id="MF_00099">
    <property type="entry name" value="CheB_chemtxs"/>
    <property type="match status" value="1"/>
</dbReference>
<dbReference type="InterPro" id="IPR008248">
    <property type="entry name" value="CheB-like"/>
</dbReference>
<dbReference type="InterPro" id="IPR035909">
    <property type="entry name" value="CheB_C"/>
</dbReference>
<dbReference type="InterPro" id="IPR011006">
    <property type="entry name" value="CheY-like_superfamily"/>
</dbReference>
<dbReference type="InterPro" id="IPR000673">
    <property type="entry name" value="Sig_transdc_resp-reg_Me-estase"/>
</dbReference>
<dbReference type="InterPro" id="IPR001789">
    <property type="entry name" value="Sig_transdc_resp-reg_receiver"/>
</dbReference>
<dbReference type="NCBIfam" id="NF001965">
    <property type="entry name" value="PRK00742.1"/>
    <property type="match status" value="1"/>
</dbReference>
<dbReference type="NCBIfam" id="NF009206">
    <property type="entry name" value="PRK12555.1"/>
    <property type="match status" value="1"/>
</dbReference>
<dbReference type="PANTHER" id="PTHR42872">
    <property type="entry name" value="PROTEIN-GLUTAMATE METHYLESTERASE/PROTEIN-GLUTAMINE GLUTAMINASE"/>
    <property type="match status" value="1"/>
</dbReference>
<dbReference type="PANTHER" id="PTHR42872:SF6">
    <property type="entry name" value="PROTEIN-GLUTAMATE METHYLESTERASE_PROTEIN-GLUTAMINE GLUTAMINASE"/>
    <property type="match status" value="1"/>
</dbReference>
<dbReference type="Pfam" id="PF01339">
    <property type="entry name" value="CheB_methylest"/>
    <property type="match status" value="1"/>
</dbReference>
<dbReference type="Pfam" id="PF00072">
    <property type="entry name" value="Response_reg"/>
    <property type="match status" value="1"/>
</dbReference>
<dbReference type="PIRSF" id="PIRSF000876">
    <property type="entry name" value="RR_chemtxs_CheB"/>
    <property type="match status" value="1"/>
</dbReference>
<dbReference type="SMART" id="SM00448">
    <property type="entry name" value="REC"/>
    <property type="match status" value="1"/>
</dbReference>
<dbReference type="SUPFAM" id="SSF52172">
    <property type="entry name" value="CheY-like"/>
    <property type="match status" value="1"/>
</dbReference>
<dbReference type="SUPFAM" id="SSF52738">
    <property type="entry name" value="Methylesterase CheB, C-terminal domain"/>
    <property type="match status" value="1"/>
</dbReference>
<dbReference type="PROSITE" id="PS50122">
    <property type="entry name" value="CHEB"/>
    <property type="match status" value="1"/>
</dbReference>
<dbReference type="PROSITE" id="PS50110">
    <property type="entry name" value="RESPONSE_REGULATORY"/>
    <property type="match status" value="1"/>
</dbReference>
<proteinExistence type="inferred from homology"/>
<keyword id="KW-0145">Chemotaxis</keyword>
<keyword id="KW-0963">Cytoplasm</keyword>
<keyword id="KW-0378">Hydrolase</keyword>
<keyword id="KW-0597">Phosphoprotein</keyword>
<organism>
    <name type="scientific">Xanthomonas euvesicatoria pv. vesicatoria (strain 85-10)</name>
    <name type="common">Xanthomonas campestris pv. vesicatoria</name>
    <dbReference type="NCBI Taxonomy" id="316273"/>
    <lineage>
        <taxon>Bacteria</taxon>
        <taxon>Pseudomonadati</taxon>
        <taxon>Pseudomonadota</taxon>
        <taxon>Gammaproteobacteria</taxon>
        <taxon>Lysobacterales</taxon>
        <taxon>Lysobacteraceae</taxon>
        <taxon>Xanthomonas</taxon>
    </lineage>
</organism>
<accession>Q3BUA2</accession>
<name>CHEB1_XANE5</name>
<protein>
    <recommendedName>
        <fullName evidence="1">Protein-glutamate methylesterase/protein-glutamine glutaminase 1</fullName>
        <ecNumber evidence="1">3.1.1.61</ecNumber>
        <ecNumber evidence="1">3.5.1.44</ecNumber>
    </recommendedName>
</protein>
<evidence type="ECO:0000255" key="1">
    <source>
        <dbReference type="HAMAP-Rule" id="MF_00099"/>
    </source>
</evidence>
<feature type="chain" id="PRO_0000225492" description="Protein-glutamate methylesterase/protein-glutamine glutaminase 1">
    <location>
        <begin position="1"/>
        <end position="358"/>
    </location>
</feature>
<feature type="domain" description="Response regulatory" evidence="1">
    <location>
        <begin position="8"/>
        <end position="125"/>
    </location>
</feature>
<feature type="domain" description="CheB-type methylesterase" evidence="1">
    <location>
        <begin position="165"/>
        <end position="352"/>
    </location>
</feature>
<feature type="active site" evidence="1">
    <location>
        <position position="177"/>
    </location>
</feature>
<feature type="active site" evidence="1">
    <location>
        <position position="203"/>
    </location>
</feature>
<feature type="active site" evidence="1">
    <location>
        <position position="299"/>
    </location>
</feature>
<feature type="modified residue" description="4-aspartylphosphate" evidence="1">
    <location>
        <position position="59"/>
    </location>
</feature>
<gene>
    <name evidence="1" type="primary">cheB1</name>
    <name type="ordered locus">XCV1930</name>
</gene>
<sequence>MTLETPVRVLIVDDSAVVRQMLTEILSRDAGIEVVGSAADPLLAREKIKRLNPDVITLDVEMPRMDGLVFLENLMRLRPTPVVMISSLTERGADTTLQALSLGAVDFVSKPKIDVARGLEGYAEEIVSKVKMAAKAKVSALNRPSAPKVTLDMQSAPVAGSALRFRTTDRLIAIGASAGGTEALRVVLEHMPADAPAVVMTQHLPASFSTAFAERLNRHSAMSVREATDGEAILPGHAYLPPGGQHLRIIRDGARWRCRIDDGPPVNRHKPAVDVLFRSVAANAGPNAVGAILTGMGDDGARGLLEMLQAGAPTLVQDEASSVVWGMPGAAYKLGAAQEVVPLDRVAERLLALSAQAR</sequence>
<reference key="1">
    <citation type="journal article" date="2005" name="J. Bacteriol.">
        <title>Insights into genome plasticity and pathogenicity of the plant pathogenic Bacterium Xanthomonas campestris pv. vesicatoria revealed by the complete genome sequence.</title>
        <authorList>
            <person name="Thieme F."/>
            <person name="Koebnik R."/>
            <person name="Bekel T."/>
            <person name="Berger C."/>
            <person name="Boch J."/>
            <person name="Buettner D."/>
            <person name="Caldana C."/>
            <person name="Gaigalat L."/>
            <person name="Goesmann A."/>
            <person name="Kay S."/>
            <person name="Kirchner O."/>
            <person name="Lanz C."/>
            <person name="Linke B."/>
            <person name="McHardy A.C."/>
            <person name="Meyer F."/>
            <person name="Mittenhuber G."/>
            <person name="Nies D.H."/>
            <person name="Niesbach-Kloesgen U."/>
            <person name="Patschkowski T."/>
            <person name="Rueckert C."/>
            <person name="Rupp O."/>
            <person name="Schneiker S."/>
            <person name="Schuster S.C."/>
            <person name="Vorhoelter F.J."/>
            <person name="Weber E."/>
            <person name="Puehler A."/>
            <person name="Bonas U."/>
            <person name="Bartels D."/>
            <person name="Kaiser O."/>
        </authorList>
    </citation>
    <scope>NUCLEOTIDE SEQUENCE [LARGE SCALE GENOMIC DNA]</scope>
    <source>
        <strain>85-10</strain>
    </source>
</reference>
<comment type="function">
    <text evidence="1">Involved in chemotaxis. Part of a chemotaxis signal transduction system that modulates chemotaxis in response to various stimuli. Catalyzes the demethylation of specific methylglutamate residues introduced into the chemoreceptors (methyl-accepting chemotaxis proteins or MCP) by CheR. Also mediates the irreversible deamidation of specific glutamine residues to glutamic acid.</text>
</comment>
<comment type="catalytic activity">
    <reaction evidence="1">
        <text>[protein]-L-glutamate 5-O-methyl ester + H2O = L-glutamyl-[protein] + methanol + H(+)</text>
        <dbReference type="Rhea" id="RHEA:23236"/>
        <dbReference type="Rhea" id="RHEA-COMP:10208"/>
        <dbReference type="Rhea" id="RHEA-COMP:10311"/>
        <dbReference type="ChEBI" id="CHEBI:15377"/>
        <dbReference type="ChEBI" id="CHEBI:15378"/>
        <dbReference type="ChEBI" id="CHEBI:17790"/>
        <dbReference type="ChEBI" id="CHEBI:29973"/>
        <dbReference type="ChEBI" id="CHEBI:82795"/>
        <dbReference type="EC" id="3.1.1.61"/>
    </reaction>
</comment>
<comment type="catalytic activity">
    <reaction evidence="1">
        <text>L-glutaminyl-[protein] + H2O = L-glutamyl-[protein] + NH4(+)</text>
        <dbReference type="Rhea" id="RHEA:16441"/>
        <dbReference type="Rhea" id="RHEA-COMP:10207"/>
        <dbReference type="Rhea" id="RHEA-COMP:10208"/>
        <dbReference type="ChEBI" id="CHEBI:15377"/>
        <dbReference type="ChEBI" id="CHEBI:28938"/>
        <dbReference type="ChEBI" id="CHEBI:29973"/>
        <dbReference type="ChEBI" id="CHEBI:30011"/>
        <dbReference type="EC" id="3.5.1.44"/>
    </reaction>
</comment>
<comment type="subcellular location">
    <subcellularLocation>
        <location evidence="1">Cytoplasm</location>
    </subcellularLocation>
</comment>
<comment type="domain">
    <text evidence="1">Contains a C-terminal catalytic domain, and an N-terminal region which modulates catalytic activity.</text>
</comment>
<comment type="PTM">
    <text evidence="1">Phosphorylated by CheA. Phosphorylation of the N-terminal regulatory domain activates the methylesterase activity.</text>
</comment>
<comment type="similarity">
    <text evidence="1">Belongs to the CheB family.</text>
</comment>